<gene>
    <name type="ordered locus">ECA2253</name>
</gene>
<feature type="signal peptide" evidence="1">
    <location>
        <begin position="1"/>
        <end position="31"/>
    </location>
</feature>
<feature type="chain" id="PRO_0000300219" description="UPF0482 protein ECA2253">
    <location>
        <begin position="32"/>
        <end position="116"/>
    </location>
</feature>
<accession>Q6D4Y7</accession>
<reference key="1">
    <citation type="journal article" date="2004" name="Proc. Natl. Acad. Sci. U.S.A.">
        <title>Genome sequence of the enterobacterial phytopathogen Erwinia carotovora subsp. atroseptica and characterization of virulence factors.</title>
        <authorList>
            <person name="Bell K.S."/>
            <person name="Sebaihia M."/>
            <person name="Pritchard L."/>
            <person name="Holden M.T.G."/>
            <person name="Hyman L.J."/>
            <person name="Holeva M.C."/>
            <person name="Thomson N.R."/>
            <person name="Bentley S.D."/>
            <person name="Churcher L.J.C."/>
            <person name="Mungall K."/>
            <person name="Atkin R."/>
            <person name="Bason N."/>
            <person name="Brooks K."/>
            <person name="Chillingworth T."/>
            <person name="Clark K."/>
            <person name="Doggett J."/>
            <person name="Fraser A."/>
            <person name="Hance Z."/>
            <person name="Hauser H."/>
            <person name="Jagels K."/>
            <person name="Moule S."/>
            <person name="Norbertczak H."/>
            <person name="Ormond D."/>
            <person name="Price C."/>
            <person name="Quail M.A."/>
            <person name="Sanders M."/>
            <person name="Walker D."/>
            <person name="Whitehead S."/>
            <person name="Salmond G.P.C."/>
            <person name="Birch P.R.J."/>
            <person name="Parkhill J."/>
            <person name="Toth I.K."/>
        </authorList>
    </citation>
    <scope>NUCLEOTIDE SEQUENCE [LARGE SCALE GENOMIC DNA]</scope>
    <source>
        <strain>SCRI 1043 / ATCC BAA-672</strain>
    </source>
</reference>
<organism>
    <name type="scientific">Pectobacterium atrosepticum (strain SCRI 1043 / ATCC BAA-672)</name>
    <name type="common">Erwinia carotovora subsp. atroseptica</name>
    <dbReference type="NCBI Taxonomy" id="218491"/>
    <lineage>
        <taxon>Bacteria</taxon>
        <taxon>Pseudomonadati</taxon>
        <taxon>Pseudomonadota</taxon>
        <taxon>Gammaproteobacteria</taxon>
        <taxon>Enterobacterales</taxon>
        <taxon>Pectobacteriaceae</taxon>
        <taxon>Pectobacterium</taxon>
    </lineage>
</organism>
<dbReference type="EMBL" id="BX950851">
    <property type="protein sequence ID" value="CAG75156.1"/>
    <property type="molecule type" value="Genomic_DNA"/>
</dbReference>
<dbReference type="RefSeq" id="WP_011093811.1">
    <property type="nucleotide sequence ID" value="NC_004547.2"/>
</dbReference>
<dbReference type="STRING" id="218491.ECA2253"/>
<dbReference type="KEGG" id="eca:ECA2253"/>
<dbReference type="PATRIC" id="fig|218491.5.peg.2283"/>
<dbReference type="eggNOG" id="ENOG5032SRB">
    <property type="taxonomic scope" value="Bacteria"/>
</dbReference>
<dbReference type="HOGENOM" id="CLU_167574_0_0_6"/>
<dbReference type="OrthoDB" id="6455281at2"/>
<dbReference type="Proteomes" id="UP000007966">
    <property type="component" value="Chromosome"/>
</dbReference>
<dbReference type="HAMAP" id="MF_01581">
    <property type="entry name" value="UPF0482"/>
    <property type="match status" value="1"/>
</dbReference>
<dbReference type="InterPro" id="IPR009700">
    <property type="entry name" value="DUF1283"/>
</dbReference>
<dbReference type="NCBIfam" id="NF010180">
    <property type="entry name" value="PRK13659.1"/>
    <property type="match status" value="1"/>
</dbReference>
<dbReference type="Pfam" id="PF06932">
    <property type="entry name" value="DUF1283"/>
    <property type="match status" value="1"/>
</dbReference>
<evidence type="ECO:0000255" key="1">
    <source>
        <dbReference type="HAMAP-Rule" id="MF_01581"/>
    </source>
</evidence>
<comment type="similarity">
    <text evidence="1">Belongs to the UPF0482 family.</text>
</comment>
<sequence>MNHYSFSSLIRALIPLSLVIVSAVWQPAALADTRHIIVDSGDSALSKEAARQSKEQWDSTRSLRNKVNNRVEKEFDKTEKSIDGREKCNASYNVNAYWENTTDRCLDRRTGRPVAP</sequence>
<protein>
    <recommendedName>
        <fullName evidence="1">UPF0482 protein ECA2253</fullName>
    </recommendedName>
</protein>
<name>Y2253_PECAS</name>
<keyword id="KW-1185">Reference proteome</keyword>
<keyword id="KW-0732">Signal</keyword>
<proteinExistence type="inferred from homology"/>